<proteinExistence type="inferred from homology"/>
<accession>A5UH50</accession>
<protein>
    <recommendedName>
        <fullName evidence="1">Small ribosomal subunit protein bS18</fullName>
    </recommendedName>
    <alternativeName>
        <fullName evidence="2">30S ribosomal protein S18</fullName>
    </alternativeName>
</protein>
<organism>
    <name type="scientific">Haemophilus influenzae (strain PittGG)</name>
    <dbReference type="NCBI Taxonomy" id="374931"/>
    <lineage>
        <taxon>Bacteria</taxon>
        <taxon>Pseudomonadati</taxon>
        <taxon>Pseudomonadota</taxon>
        <taxon>Gammaproteobacteria</taxon>
        <taxon>Pasteurellales</taxon>
        <taxon>Pasteurellaceae</taxon>
        <taxon>Haemophilus</taxon>
    </lineage>
</organism>
<gene>
    <name evidence="1" type="primary">rpsR</name>
    <name type="ordered locus">CGSHiGG_05985</name>
</gene>
<evidence type="ECO:0000255" key="1">
    <source>
        <dbReference type="HAMAP-Rule" id="MF_00270"/>
    </source>
</evidence>
<evidence type="ECO:0000305" key="2"/>
<keyword id="KW-0687">Ribonucleoprotein</keyword>
<keyword id="KW-0689">Ribosomal protein</keyword>
<keyword id="KW-0694">RNA-binding</keyword>
<keyword id="KW-0699">rRNA-binding</keyword>
<comment type="function">
    <text evidence="1">Binds as a heterodimer with protein bS6 to the central domain of the 16S rRNA, where it helps stabilize the platform of the 30S subunit.</text>
</comment>
<comment type="subunit">
    <text evidence="1">Part of the 30S ribosomal subunit. Forms a tight heterodimer with protein bS6.</text>
</comment>
<comment type="similarity">
    <text evidence="1">Belongs to the bacterial ribosomal protein bS18 family.</text>
</comment>
<reference key="1">
    <citation type="journal article" date="2007" name="Genome Biol.">
        <title>Characterization and modeling of the Haemophilus influenzae core and supragenomes based on the complete genomic sequences of Rd and 12 clinical nontypeable strains.</title>
        <authorList>
            <person name="Hogg J.S."/>
            <person name="Hu F.Z."/>
            <person name="Janto B."/>
            <person name="Boissy R."/>
            <person name="Hayes J."/>
            <person name="Keefe R."/>
            <person name="Post J.C."/>
            <person name="Ehrlich G.D."/>
        </authorList>
    </citation>
    <scope>NUCLEOTIDE SEQUENCE [LARGE SCALE GENOMIC DNA]</scope>
    <source>
        <strain>PittGG</strain>
    </source>
</reference>
<sequence length="75" mass="8942">MARYFRRRKFCRFTAENVVEIDYKDIATLKNYISESGKIVPSRITGTRAKYQRQLARAIKRARYLALLPYTDNHQ</sequence>
<name>RS18_HAEIG</name>
<dbReference type="EMBL" id="CP000672">
    <property type="protein sequence ID" value="ABR00106.1"/>
    <property type="molecule type" value="Genomic_DNA"/>
</dbReference>
<dbReference type="SMR" id="A5UH50"/>
<dbReference type="KEGG" id="hiq:CGSHiGG_05985"/>
<dbReference type="HOGENOM" id="CLU_148710_2_2_6"/>
<dbReference type="Proteomes" id="UP000001990">
    <property type="component" value="Chromosome"/>
</dbReference>
<dbReference type="GO" id="GO:0022627">
    <property type="term" value="C:cytosolic small ribosomal subunit"/>
    <property type="evidence" value="ECO:0007669"/>
    <property type="project" value="TreeGrafter"/>
</dbReference>
<dbReference type="GO" id="GO:0070181">
    <property type="term" value="F:small ribosomal subunit rRNA binding"/>
    <property type="evidence" value="ECO:0007669"/>
    <property type="project" value="TreeGrafter"/>
</dbReference>
<dbReference type="GO" id="GO:0003735">
    <property type="term" value="F:structural constituent of ribosome"/>
    <property type="evidence" value="ECO:0007669"/>
    <property type="project" value="InterPro"/>
</dbReference>
<dbReference type="GO" id="GO:0006412">
    <property type="term" value="P:translation"/>
    <property type="evidence" value="ECO:0007669"/>
    <property type="project" value="UniProtKB-UniRule"/>
</dbReference>
<dbReference type="FunFam" id="4.10.640.10:FF:000001">
    <property type="entry name" value="30S ribosomal protein S18"/>
    <property type="match status" value="1"/>
</dbReference>
<dbReference type="Gene3D" id="4.10.640.10">
    <property type="entry name" value="Ribosomal protein S18"/>
    <property type="match status" value="1"/>
</dbReference>
<dbReference type="HAMAP" id="MF_00270">
    <property type="entry name" value="Ribosomal_bS18"/>
    <property type="match status" value="1"/>
</dbReference>
<dbReference type="InterPro" id="IPR001648">
    <property type="entry name" value="Ribosomal_bS18"/>
</dbReference>
<dbReference type="InterPro" id="IPR018275">
    <property type="entry name" value="Ribosomal_bS18_CS"/>
</dbReference>
<dbReference type="InterPro" id="IPR036870">
    <property type="entry name" value="Ribosomal_bS18_sf"/>
</dbReference>
<dbReference type="NCBIfam" id="TIGR00165">
    <property type="entry name" value="S18"/>
    <property type="match status" value="1"/>
</dbReference>
<dbReference type="PANTHER" id="PTHR13479">
    <property type="entry name" value="30S RIBOSOMAL PROTEIN S18"/>
    <property type="match status" value="1"/>
</dbReference>
<dbReference type="PANTHER" id="PTHR13479:SF40">
    <property type="entry name" value="SMALL RIBOSOMAL SUBUNIT PROTEIN BS18M"/>
    <property type="match status" value="1"/>
</dbReference>
<dbReference type="Pfam" id="PF01084">
    <property type="entry name" value="Ribosomal_S18"/>
    <property type="match status" value="1"/>
</dbReference>
<dbReference type="PRINTS" id="PR00974">
    <property type="entry name" value="RIBOSOMALS18"/>
</dbReference>
<dbReference type="SUPFAM" id="SSF46911">
    <property type="entry name" value="Ribosomal protein S18"/>
    <property type="match status" value="1"/>
</dbReference>
<dbReference type="PROSITE" id="PS00057">
    <property type="entry name" value="RIBOSOMAL_S18"/>
    <property type="match status" value="1"/>
</dbReference>
<feature type="chain" id="PRO_1000003504" description="Small ribosomal subunit protein bS18">
    <location>
        <begin position="1"/>
        <end position="75"/>
    </location>
</feature>